<feature type="chain" id="PRO_0000074492" description="Na(+)-translocating NADH-quinone reductase subunit F">
    <location>
        <begin position="1"/>
        <end position="431"/>
    </location>
</feature>
<feature type="transmembrane region" description="Helical" evidence="1">
    <location>
        <begin position="10"/>
        <end position="30"/>
    </location>
</feature>
<feature type="domain" description="2Fe-2S ferredoxin-type" evidence="1">
    <location>
        <begin position="41"/>
        <end position="133"/>
    </location>
</feature>
<feature type="domain" description="FAD-binding FR-type" evidence="1">
    <location>
        <begin position="136"/>
        <end position="286"/>
    </location>
</feature>
<feature type="region of interest" description="Catalytic">
    <location>
        <begin position="289"/>
        <end position="413"/>
    </location>
</feature>
<feature type="binding site" evidence="1">
    <location>
        <position position="76"/>
    </location>
    <ligand>
        <name>[2Fe-2S] cluster</name>
        <dbReference type="ChEBI" id="CHEBI:190135"/>
    </ligand>
</feature>
<feature type="binding site" evidence="1">
    <location>
        <position position="82"/>
    </location>
    <ligand>
        <name>[2Fe-2S] cluster</name>
        <dbReference type="ChEBI" id="CHEBI:190135"/>
    </ligand>
</feature>
<feature type="binding site" evidence="1">
    <location>
        <position position="85"/>
    </location>
    <ligand>
        <name>[2Fe-2S] cluster</name>
        <dbReference type="ChEBI" id="CHEBI:190135"/>
    </ligand>
</feature>
<feature type="binding site" evidence="1">
    <location>
        <position position="117"/>
    </location>
    <ligand>
        <name>[2Fe-2S] cluster</name>
        <dbReference type="ChEBI" id="CHEBI:190135"/>
    </ligand>
</feature>
<reference key="1">
    <citation type="journal article" date="1998" name="Science">
        <title>Genome sequence of an obligate intracellular pathogen of humans: Chlamydia trachomatis.</title>
        <authorList>
            <person name="Stephens R.S."/>
            <person name="Kalman S."/>
            <person name="Lammel C.J."/>
            <person name="Fan J."/>
            <person name="Marathe R."/>
            <person name="Aravind L."/>
            <person name="Mitchell W.P."/>
            <person name="Olinger L."/>
            <person name="Tatusov R.L."/>
            <person name="Zhao Q."/>
            <person name="Koonin E.V."/>
            <person name="Davis R.W."/>
        </authorList>
    </citation>
    <scope>NUCLEOTIDE SEQUENCE [LARGE SCALE GENOMIC DNA]</scope>
    <source>
        <strain>ATCC VR-885 / DSM 19411 / UW-3/Cx</strain>
    </source>
</reference>
<evidence type="ECO:0000255" key="1">
    <source>
        <dbReference type="HAMAP-Rule" id="MF_00430"/>
    </source>
</evidence>
<organism>
    <name type="scientific">Chlamydia trachomatis serovar D (strain ATCC VR-885 / DSM 19411 / UW-3/Cx)</name>
    <dbReference type="NCBI Taxonomy" id="272561"/>
    <lineage>
        <taxon>Bacteria</taxon>
        <taxon>Pseudomonadati</taxon>
        <taxon>Chlamydiota</taxon>
        <taxon>Chlamydiia</taxon>
        <taxon>Chlamydiales</taxon>
        <taxon>Chlamydiaceae</taxon>
        <taxon>Chlamydia/Chlamydophila group</taxon>
        <taxon>Chlamydia</taxon>
    </lineage>
</organism>
<dbReference type="EC" id="7.2.1.1" evidence="1"/>
<dbReference type="EMBL" id="AE001273">
    <property type="protein sequence ID" value="AAC68335.1"/>
    <property type="molecule type" value="Genomic_DNA"/>
</dbReference>
<dbReference type="PIR" id="F71476">
    <property type="entry name" value="F71476"/>
</dbReference>
<dbReference type="RefSeq" id="WP_010725328.1">
    <property type="nucleotide sequence ID" value="NC_000117.1"/>
</dbReference>
<dbReference type="SMR" id="O84745"/>
<dbReference type="STRING" id="272561.CT_740"/>
<dbReference type="EnsemblBacteria" id="AAC68335">
    <property type="protein sequence ID" value="AAC68335"/>
    <property type="gene ID" value="CT_740"/>
</dbReference>
<dbReference type="KEGG" id="ctr:CT_740"/>
<dbReference type="PATRIC" id="fig|272561.5.peg.814"/>
<dbReference type="HOGENOM" id="CLU_003827_7_2_0"/>
<dbReference type="InParanoid" id="O84745"/>
<dbReference type="OrthoDB" id="9796486at2"/>
<dbReference type="Proteomes" id="UP000000431">
    <property type="component" value="Chromosome"/>
</dbReference>
<dbReference type="GO" id="GO:0005886">
    <property type="term" value="C:plasma membrane"/>
    <property type="evidence" value="ECO:0007669"/>
    <property type="project" value="UniProtKB-SubCell"/>
</dbReference>
<dbReference type="GO" id="GO:0051537">
    <property type="term" value="F:2 iron, 2 sulfur cluster binding"/>
    <property type="evidence" value="ECO:0007669"/>
    <property type="project" value="UniProtKB-KW"/>
</dbReference>
<dbReference type="GO" id="GO:0009055">
    <property type="term" value="F:electron transfer activity"/>
    <property type="evidence" value="ECO:0007669"/>
    <property type="project" value="UniProtKB-UniRule"/>
</dbReference>
<dbReference type="GO" id="GO:0046872">
    <property type="term" value="F:metal ion binding"/>
    <property type="evidence" value="ECO:0007669"/>
    <property type="project" value="UniProtKB-KW"/>
</dbReference>
<dbReference type="GO" id="GO:0016655">
    <property type="term" value="F:oxidoreductase activity, acting on NAD(P)H, quinone or similar compound as acceptor"/>
    <property type="evidence" value="ECO:0007669"/>
    <property type="project" value="InterPro"/>
</dbReference>
<dbReference type="GO" id="GO:0006814">
    <property type="term" value="P:sodium ion transport"/>
    <property type="evidence" value="ECO:0007669"/>
    <property type="project" value="UniProtKB-UniRule"/>
</dbReference>
<dbReference type="CDD" id="cd00207">
    <property type="entry name" value="fer2"/>
    <property type="match status" value="1"/>
</dbReference>
<dbReference type="CDD" id="cd06188">
    <property type="entry name" value="NADH_quinone_reductase"/>
    <property type="match status" value="1"/>
</dbReference>
<dbReference type="Gene3D" id="3.10.20.30">
    <property type="match status" value="1"/>
</dbReference>
<dbReference type="Gene3D" id="3.40.50.80">
    <property type="entry name" value="Nucleotide-binding domain of ferredoxin-NADP reductase (FNR) module"/>
    <property type="match status" value="1"/>
</dbReference>
<dbReference type="Gene3D" id="2.40.30.10">
    <property type="entry name" value="Translation factors"/>
    <property type="match status" value="1"/>
</dbReference>
<dbReference type="HAMAP" id="MF_00430">
    <property type="entry name" value="NqrF"/>
    <property type="match status" value="1"/>
</dbReference>
<dbReference type="InterPro" id="IPR036010">
    <property type="entry name" value="2Fe-2S_ferredoxin-like_sf"/>
</dbReference>
<dbReference type="InterPro" id="IPR001041">
    <property type="entry name" value="2Fe-2S_ferredoxin-type"/>
</dbReference>
<dbReference type="InterPro" id="IPR012675">
    <property type="entry name" value="Beta-grasp_dom_sf"/>
</dbReference>
<dbReference type="InterPro" id="IPR017927">
    <property type="entry name" value="FAD-bd_FR_type"/>
</dbReference>
<dbReference type="InterPro" id="IPR039261">
    <property type="entry name" value="FNR_nucleotide-bd"/>
</dbReference>
<dbReference type="InterPro" id="IPR010205">
    <property type="entry name" value="NqrF"/>
</dbReference>
<dbReference type="InterPro" id="IPR001433">
    <property type="entry name" value="OxRdtase_FAD/NAD-bd"/>
</dbReference>
<dbReference type="InterPro" id="IPR017938">
    <property type="entry name" value="Riboflavin_synthase-like_b-brl"/>
</dbReference>
<dbReference type="NCBIfam" id="TIGR01941">
    <property type="entry name" value="nqrF"/>
    <property type="match status" value="1"/>
</dbReference>
<dbReference type="PANTHER" id="PTHR43644">
    <property type="entry name" value="NA(+)-TRANSLOCATING NADH-QUINONE REDUCTASE SUBUNIT"/>
    <property type="match status" value="1"/>
</dbReference>
<dbReference type="PANTHER" id="PTHR43644:SF1">
    <property type="entry name" value="NAD(P)H-FLAVIN REDUCTASE"/>
    <property type="match status" value="1"/>
</dbReference>
<dbReference type="Pfam" id="PF00111">
    <property type="entry name" value="Fer2"/>
    <property type="match status" value="1"/>
</dbReference>
<dbReference type="Pfam" id="PF00175">
    <property type="entry name" value="NAD_binding_1"/>
    <property type="match status" value="1"/>
</dbReference>
<dbReference type="PIRSF" id="PIRSF000044">
    <property type="entry name" value="Cis_Diol_DH_RD"/>
    <property type="match status" value="1"/>
</dbReference>
<dbReference type="SUPFAM" id="SSF54292">
    <property type="entry name" value="2Fe-2S ferredoxin-like"/>
    <property type="match status" value="1"/>
</dbReference>
<dbReference type="SUPFAM" id="SSF52343">
    <property type="entry name" value="Ferredoxin reductase-like, C-terminal NADP-linked domain"/>
    <property type="match status" value="1"/>
</dbReference>
<dbReference type="SUPFAM" id="SSF63380">
    <property type="entry name" value="Riboflavin synthase domain-like"/>
    <property type="match status" value="1"/>
</dbReference>
<dbReference type="PROSITE" id="PS51085">
    <property type="entry name" value="2FE2S_FER_2"/>
    <property type="match status" value="1"/>
</dbReference>
<dbReference type="PROSITE" id="PS51384">
    <property type="entry name" value="FAD_FR"/>
    <property type="match status" value="1"/>
</dbReference>
<name>NQRF_CHLTR</name>
<protein>
    <recommendedName>
        <fullName evidence="1">Na(+)-translocating NADH-quinone reductase subunit F</fullName>
        <shortName evidence="1">Na(+)-NQR subunit F</shortName>
        <shortName evidence="1">Na(+)-translocating NQR subunit F</shortName>
        <ecNumber evidence="1">7.2.1.1</ecNumber>
    </recommendedName>
    <alternativeName>
        <fullName evidence="1">NQR complex subunit F</fullName>
    </alternativeName>
    <alternativeName>
        <fullName evidence="1">NQR-1 subunit F</fullName>
    </alternativeName>
</protein>
<keyword id="KW-0001">2Fe-2S</keyword>
<keyword id="KW-0997">Cell inner membrane</keyword>
<keyword id="KW-1003">Cell membrane</keyword>
<keyword id="KW-0274">FAD</keyword>
<keyword id="KW-0285">Flavoprotein</keyword>
<keyword id="KW-0406">Ion transport</keyword>
<keyword id="KW-0408">Iron</keyword>
<keyword id="KW-0411">Iron-sulfur</keyword>
<keyword id="KW-0472">Membrane</keyword>
<keyword id="KW-0479">Metal-binding</keyword>
<keyword id="KW-0520">NAD</keyword>
<keyword id="KW-1185">Reference proteome</keyword>
<keyword id="KW-0915">Sodium</keyword>
<keyword id="KW-0739">Sodium transport</keyword>
<keyword id="KW-1278">Translocase</keyword>
<keyword id="KW-0812">Transmembrane</keyword>
<keyword id="KW-1133">Transmembrane helix</keyword>
<keyword id="KW-0813">Transport</keyword>
<keyword id="KW-0830">Ubiquinone</keyword>
<comment type="function">
    <text evidence="1">NQR complex catalyzes the reduction of ubiquinone-1 to ubiquinol by two successive reactions, coupled with the transport of Na(+) ions from the cytoplasm to the periplasm. The first step is catalyzed by NqrF, which accepts electrons from NADH and reduces ubiquinone-1 to ubisemiquinone by a one-electron transfer pathway.</text>
</comment>
<comment type="catalytic activity">
    <reaction evidence="1">
        <text>a ubiquinone + n Na(+)(in) + NADH + H(+) = a ubiquinol + n Na(+)(out) + NAD(+)</text>
        <dbReference type="Rhea" id="RHEA:47748"/>
        <dbReference type="Rhea" id="RHEA-COMP:9565"/>
        <dbReference type="Rhea" id="RHEA-COMP:9566"/>
        <dbReference type="ChEBI" id="CHEBI:15378"/>
        <dbReference type="ChEBI" id="CHEBI:16389"/>
        <dbReference type="ChEBI" id="CHEBI:17976"/>
        <dbReference type="ChEBI" id="CHEBI:29101"/>
        <dbReference type="ChEBI" id="CHEBI:57540"/>
        <dbReference type="ChEBI" id="CHEBI:57945"/>
        <dbReference type="EC" id="7.2.1.1"/>
    </reaction>
</comment>
<comment type="cofactor">
    <cofactor evidence="1">
        <name>[2Fe-2S] cluster</name>
        <dbReference type="ChEBI" id="CHEBI:190135"/>
    </cofactor>
    <text evidence="1">Binds 1 [2Fe-2S] cluster.</text>
</comment>
<comment type="cofactor">
    <cofactor evidence="1">
        <name>FAD</name>
        <dbReference type="ChEBI" id="CHEBI:57692"/>
    </cofactor>
</comment>
<comment type="subunit">
    <text evidence="1">Composed of six subunits; NqrA, NqrB, NqrC, NqrD, NqrE and NqrF.</text>
</comment>
<comment type="subcellular location">
    <subcellularLocation>
        <location evidence="1">Cell inner membrane</location>
        <topology evidence="1">Single-pass membrane protein</topology>
    </subcellularLocation>
</comment>
<comment type="similarity">
    <text evidence="1">Belongs to the NqrF family.</text>
</comment>
<gene>
    <name evidence="1" type="primary">nqrF</name>
    <name type="synonym">nqr6</name>
    <name type="ordered locus">CT_740</name>
</gene>
<proteinExistence type="inferred from homology"/>
<sequence>MTWLSGLYSIFVASAAFCSLGLILVAVILLSRKFLIKVHPCKLKINNDDSLTKTVDSGKTLLSSLLDSGIAIPSPCGGKAACKQCKVRITKNADEPLETDRSTFSKQQLEQGWRLSCQTKVQHDLCLEVEERYFNASSWEGTVVSNENVATFIKELVLSVDPSRPIPFKPGGYLQITVPPYKTNTSDWKQTMDPQYYSDWETFHLFDQIIDNLSLDTDSANKAYSLASYPAELPLIKFNVRIATPPFVDQAPDPTIPWGVCSSYIFSLKPGDKVMVSGPYGESFMKEDNRPVIFLIGGAGSSFGRSHILDLLLNKHSDRELTLWYGARSLKENIYQEEYEKLEKEFPNFHYHLVLSQPLQEDLDQGWDKNDPIKTNFLFKAFELGQLSHLPNPEDYLYYVCGPALHNSSILTLLDNYGVERSSIVLDDFGS</sequence>
<accession>O84745</accession>